<reference key="1">
    <citation type="submission" date="2006-08" db="EMBL/GenBank/DDBJ databases">
        <title>Complete sequence of chromosome 1 of Shewanella sp. MR-7.</title>
        <authorList>
            <person name="Copeland A."/>
            <person name="Lucas S."/>
            <person name="Lapidus A."/>
            <person name="Barry K."/>
            <person name="Detter J.C."/>
            <person name="Glavina del Rio T."/>
            <person name="Hammon N."/>
            <person name="Israni S."/>
            <person name="Dalin E."/>
            <person name="Tice H."/>
            <person name="Pitluck S."/>
            <person name="Kiss H."/>
            <person name="Brettin T."/>
            <person name="Bruce D."/>
            <person name="Han C."/>
            <person name="Tapia R."/>
            <person name="Gilna P."/>
            <person name="Schmutz J."/>
            <person name="Larimer F."/>
            <person name="Land M."/>
            <person name="Hauser L."/>
            <person name="Kyrpides N."/>
            <person name="Mikhailova N."/>
            <person name="Nealson K."/>
            <person name="Konstantinidis K."/>
            <person name="Klappenbach J."/>
            <person name="Tiedje J."/>
            <person name="Richardson P."/>
        </authorList>
    </citation>
    <scope>NUCLEOTIDE SEQUENCE [LARGE SCALE GENOMIC DNA]</scope>
    <source>
        <strain>MR-7</strain>
    </source>
</reference>
<sequence>MTTLTITRPDDWHIHLRDGAQLKDTVRDISRYMGRAIVMPNLVPPAIDTETALAYYDRIKAQVPAGSQFEPLMVLYLTDKTSPEEIRKAKASGKIVAAKLYPAGATTNSDSGVTDLKNIYPALEAMQEVGMLFLVHGEVTDSSIDIFDRERVFIENILSKIVADFPKLKIVLEHITTKDAVDFVTQASDNVAATITAHHLLYNRNHMLAGGIRPHFYCLPILKRNTHQQALLGAAASGNKKFFLGTDSAPHAKDRKEAACGCAGSYTAHAAIELYAEAFESVNALDKLEAFASFNGPDFYNLPRNSDTITLVKKSWDVPVSYPLGDNNVVPIRAGEQIDWQVE</sequence>
<proteinExistence type="inferred from homology"/>
<accession>Q0HRV9</accession>
<organism>
    <name type="scientific">Shewanella sp. (strain MR-7)</name>
    <dbReference type="NCBI Taxonomy" id="60481"/>
    <lineage>
        <taxon>Bacteria</taxon>
        <taxon>Pseudomonadati</taxon>
        <taxon>Pseudomonadota</taxon>
        <taxon>Gammaproteobacteria</taxon>
        <taxon>Alteromonadales</taxon>
        <taxon>Shewanellaceae</taxon>
        <taxon>Shewanella</taxon>
    </lineage>
</organism>
<name>PYRC_SHESR</name>
<protein>
    <recommendedName>
        <fullName evidence="1">Dihydroorotase</fullName>
        <shortName evidence="1">DHOase</shortName>
        <ecNumber evidence="1">3.5.2.3</ecNumber>
    </recommendedName>
</protein>
<comment type="function">
    <text evidence="1">Catalyzes the reversible cyclization of carbamoyl aspartate to dihydroorotate.</text>
</comment>
<comment type="catalytic activity">
    <reaction evidence="1">
        <text>(S)-dihydroorotate + H2O = N-carbamoyl-L-aspartate + H(+)</text>
        <dbReference type="Rhea" id="RHEA:24296"/>
        <dbReference type="ChEBI" id="CHEBI:15377"/>
        <dbReference type="ChEBI" id="CHEBI:15378"/>
        <dbReference type="ChEBI" id="CHEBI:30864"/>
        <dbReference type="ChEBI" id="CHEBI:32814"/>
        <dbReference type="EC" id="3.5.2.3"/>
    </reaction>
</comment>
<comment type="cofactor">
    <cofactor evidence="1">
        <name>Zn(2+)</name>
        <dbReference type="ChEBI" id="CHEBI:29105"/>
    </cofactor>
    <text evidence="1">Binds 2 Zn(2+) ions per subunit.</text>
</comment>
<comment type="pathway">
    <text evidence="1">Pyrimidine metabolism; UMP biosynthesis via de novo pathway; (S)-dihydroorotate from bicarbonate: step 3/3.</text>
</comment>
<comment type="subunit">
    <text evidence="1">Homodimer.</text>
</comment>
<comment type="similarity">
    <text evidence="1">Belongs to the metallo-dependent hydrolases superfamily. DHOase family. Class II DHOase subfamily.</text>
</comment>
<comment type="sequence caution" evidence="2">
    <conflict type="erroneous initiation">
        <sequence resource="EMBL-CDS" id="ABI44146"/>
    </conflict>
</comment>
<gene>
    <name evidence="1" type="primary">pyrC</name>
    <name type="ordered locus">Shewmr7_3162</name>
</gene>
<keyword id="KW-0378">Hydrolase</keyword>
<keyword id="KW-0479">Metal-binding</keyword>
<keyword id="KW-0665">Pyrimidine biosynthesis</keyword>
<keyword id="KW-0862">Zinc</keyword>
<evidence type="ECO:0000255" key="1">
    <source>
        <dbReference type="HAMAP-Rule" id="MF_00219"/>
    </source>
</evidence>
<evidence type="ECO:0000305" key="2"/>
<dbReference type="EC" id="3.5.2.3" evidence="1"/>
<dbReference type="EMBL" id="CP000444">
    <property type="protein sequence ID" value="ABI44146.1"/>
    <property type="status" value="ALT_INIT"/>
    <property type="molecule type" value="Genomic_DNA"/>
</dbReference>
<dbReference type="SMR" id="Q0HRV9"/>
<dbReference type="MEROPS" id="M38.A02"/>
<dbReference type="KEGG" id="shm:Shewmr7_3162"/>
<dbReference type="HOGENOM" id="CLU_041558_1_0_6"/>
<dbReference type="UniPathway" id="UPA00070">
    <property type="reaction ID" value="UER00117"/>
</dbReference>
<dbReference type="GO" id="GO:0005829">
    <property type="term" value="C:cytosol"/>
    <property type="evidence" value="ECO:0007669"/>
    <property type="project" value="TreeGrafter"/>
</dbReference>
<dbReference type="GO" id="GO:0004151">
    <property type="term" value="F:dihydroorotase activity"/>
    <property type="evidence" value="ECO:0007669"/>
    <property type="project" value="UniProtKB-UniRule"/>
</dbReference>
<dbReference type="GO" id="GO:0008270">
    <property type="term" value="F:zinc ion binding"/>
    <property type="evidence" value="ECO:0007669"/>
    <property type="project" value="UniProtKB-UniRule"/>
</dbReference>
<dbReference type="GO" id="GO:0006207">
    <property type="term" value="P:'de novo' pyrimidine nucleobase biosynthetic process"/>
    <property type="evidence" value="ECO:0007669"/>
    <property type="project" value="TreeGrafter"/>
</dbReference>
<dbReference type="GO" id="GO:0044205">
    <property type="term" value="P:'de novo' UMP biosynthetic process"/>
    <property type="evidence" value="ECO:0007669"/>
    <property type="project" value="UniProtKB-UniRule"/>
</dbReference>
<dbReference type="CDD" id="cd01294">
    <property type="entry name" value="DHOase"/>
    <property type="match status" value="1"/>
</dbReference>
<dbReference type="FunFam" id="3.20.20.140:FF:000006">
    <property type="entry name" value="Dihydroorotase"/>
    <property type="match status" value="1"/>
</dbReference>
<dbReference type="Gene3D" id="3.20.20.140">
    <property type="entry name" value="Metal-dependent hydrolases"/>
    <property type="match status" value="1"/>
</dbReference>
<dbReference type="HAMAP" id="MF_00219">
    <property type="entry name" value="PyrC_classII"/>
    <property type="match status" value="1"/>
</dbReference>
<dbReference type="InterPro" id="IPR006680">
    <property type="entry name" value="Amidohydro-rel"/>
</dbReference>
<dbReference type="InterPro" id="IPR004721">
    <property type="entry name" value="DHOdimr"/>
</dbReference>
<dbReference type="InterPro" id="IPR002195">
    <property type="entry name" value="Dihydroorotase_CS"/>
</dbReference>
<dbReference type="InterPro" id="IPR032466">
    <property type="entry name" value="Metal_Hydrolase"/>
</dbReference>
<dbReference type="NCBIfam" id="TIGR00856">
    <property type="entry name" value="pyrC_dimer"/>
    <property type="match status" value="1"/>
</dbReference>
<dbReference type="PANTHER" id="PTHR43137">
    <property type="entry name" value="DIHYDROOROTASE"/>
    <property type="match status" value="1"/>
</dbReference>
<dbReference type="PANTHER" id="PTHR43137:SF1">
    <property type="entry name" value="DIHYDROOROTASE"/>
    <property type="match status" value="1"/>
</dbReference>
<dbReference type="Pfam" id="PF01979">
    <property type="entry name" value="Amidohydro_1"/>
    <property type="match status" value="1"/>
</dbReference>
<dbReference type="PIRSF" id="PIRSF001237">
    <property type="entry name" value="DHOdimr"/>
    <property type="match status" value="1"/>
</dbReference>
<dbReference type="SUPFAM" id="SSF51556">
    <property type="entry name" value="Metallo-dependent hydrolases"/>
    <property type="match status" value="1"/>
</dbReference>
<dbReference type="PROSITE" id="PS00482">
    <property type="entry name" value="DIHYDROOROTASE_1"/>
    <property type="match status" value="1"/>
</dbReference>
<dbReference type="PROSITE" id="PS00483">
    <property type="entry name" value="DIHYDROOROTASE_2"/>
    <property type="match status" value="1"/>
</dbReference>
<feature type="chain" id="PRO_0000325578" description="Dihydroorotase">
    <location>
        <begin position="1"/>
        <end position="343"/>
    </location>
</feature>
<feature type="active site" evidence="1">
    <location>
        <position position="247"/>
    </location>
</feature>
<feature type="binding site" evidence="1">
    <location>
        <position position="13"/>
    </location>
    <ligand>
        <name>Zn(2+)</name>
        <dbReference type="ChEBI" id="CHEBI:29105"/>
        <label>1</label>
    </ligand>
</feature>
<feature type="binding site" evidence="1">
    <location>
        <begin position="15"/>
        <end position="17"/>
    </location>
    <ligand>
        <name>substrate</name>
    </ligand>
</feature>
<feature type="binding site" evidence="1">
    <location>
        <position position="15"/>
    </location>
    <ligand>
        <name>Zn(2+)</name>
        <dbReference type="ChEBI" id="CHEBI:29105"/>
        <label>1</label>
    </ligand>
</feature>
<feature type="binding site" evidence="1">
    <location>
        <position position="41"/>
    </location>
    <ligand>
        <name>substrate</name>
    </ligand>
</feature>
<feature type="binding site" description="via carbamate group" evidence="1">
    <location>
        <position position="99"/>
    </location>
    <ligand>
        <name>Zn(2+)</name>
        <dbReference type="ChEBI" id="CHEBI:29105"/>
        <label>1</label>
    </ligand>
</feature>
<feature type="binding site" description="via carbamate group" evidence="1">
    <location>
        <position position="99"/>
    </location>
    <ligand>
        <name>Zn(2+)</name>
        <dbReference type="ChEBI" id="CHEBI:29105"/>
        <label>2</label>
    </ligand>
</feature>
<feature type="binding site" evidence="1">
    <location>
        <position position="136"/>
    </location>
    <ligand>
        <name>substrate</name>
    </ligand>
</feature>
<feature type="binding site" evidence="1">
    <location>
        <position position="136"/>
    </location>
    <ligand>
        <name>Zn(2+)</name>
        <dbReference type="ChEBI" id="CHEBI:29105"/>
        <label>2</label>
    </ligand>
</feature>
<feature type="binding site" evidence="1">
    <location>
        <position position="174"/>
    </location>
    <ligand>
        <name>Zn(2+)</name>
        <dbReference type="ChEBI" id="CHEBI:29105"/>
        <label>2</label>
    </ligand>
</feature>
<feature type="binding site" evidence="1">
    <location>
        <position position="219"/>
    </location>
    <ligand>
        <name>substrate</name>
    </ligand>
</feature>
<feature type="binding site" evidence="1">
    <location>
        <position position="247"/>
    </location>
    <ligand>
        <name>Zn(2+)</name>
        <dbReference type="ChEBI" id="CHEBI:29105"/>
        <label>1</label>
    </ligand>
</feature>
<feature type="binding site" evidence="1">
    <location>
        <position position="251"/>
    </location>
    <ligand>
        <name>substrate</name>
    </ligand>
</feature>
<feature type="binding site" evidence="1">
    <location>
        <position position="263"/>
    </location>
    <ligand>
        <name>substrate</name>
    </ligand>
</feature>
<feature type="modified residue" description="N6-carboxylysine" evidence="1">
    <location>
        <position position="99"/>
    </location>
</feature>